<dbReference type="EC" id="1.8.1.4"/>
<dbReference type="EMBL" id="L40360">
    <property type="protein sequence ID" value="AAB97089.1"/>
    <property type="molecule type" value="mRNA"/>
</dbReference>
<dbReference type="EMBL" id="CU329670">
    <property type="protein sequence ID" value="CAB65609.1"/>
    <property type="molecule type" value="Genomic_DNA"/>
</dbReference>
<dbReference type="PIR" id="T43405">
    <property type="entry name" value="T43405"/>
</dbReference>
<dbReference type="RefSeq" id="NP_593496.1">
    <property type="nucleotide sequence ID" value="NM_001018930.2"/>
</dbReference>
<dbReference type="SMR" id="O00087"/>
<dbReference type="BioGRID" id="279697">
    <property type="interactions" value="2"/>
</dbReference>
<dbReference type="FunCoup" id="O00087">
    <property type="interactions" value="510"/>
</dbReference>
<dbReference type="STRING" id="284812.O00087"/>
<dbReference type="iPTMnet" id="O00087"/>
<dbReference type="PaxDb" id="4896-SPAC1002.09c.1"/>
<dbReference type="EnsemblFungi" id="SPAC1002.09c.1">
    <property type="protein sequence ID" value="SPAC1002.09c.1:pep"/>
    <property type="gene ID" value="SPAC1002.09c"/>
</dbReference>
<dbReference type="GeneID" id="2543269"/>
<dbReference type="KEGG" id="spo:2543269"/>
<dbReference type="PomBase" id="SPAC1002.09c">
    <property type="gene designation" value="dld1"/>
</dbReference>
<dbReference type="VEuPathDB" id="FungiDB:SPAC1002.09c"/>
<dbReference type="eggNOG" id="KOG1335">
    <property type="taxonomic scope" value="Eukaryota"/>
</dbReference>
<dbReference type="HOGENOM" id="CLU_016755_0_1_1"/>
<dbReference type="InParanoid" id="O00087"/>
<dbReference type="OMA" id="CAQLGMK"/>
<dbReference type="PhylomeDB" id="O00087"/>
<dbReference type="Reactome" id="R-SPO-204174">
    <property type="pathway name" value="Regulation of pyruvate dehydrogenase (PDH) complex"/>
</dbReference>
<dbReference type="Reactome" id="R-SPO-5362517">
    <property type="pathway name" value="Signaling by Retinoic Acid"/>
</dbReference>
<dbReference type="Reactome" id="R-SPO-6783984">
    <property type="pathway name" value="Glycine degradation"/>
</dbReference>
<dbReference type="Reactome" id="R-SPO-9853506">
    <property type="pathway name" value="OGDH complex synthesizes succinyl-CoA from 2-OG"/>
</dbReference>
<dbReference type="Reactome" id="R-SPO-9861559">
    <property type="pathway name" value="PDH complex synthesizes acetyl-CoA from PYR"/>
</dbReference>
<dbReference type="PRO" id="PR:O00087"/>
<dbReference type="Proteomes" id="UP000002485">
    <property type="component" value="Chromosome I"/>
</dbReference>
<dbReference type="GO" id="GO:0005960">
    <property type="term" value="C:glycine cleavage complex"/>
    <property type="evidence" value="ECO:0000266"/>
    <property type="project" value="PomBase"/>
</dbReference>
<dbReference type="GO" id="GO:0005759">
    <property type="term" value="C:mitochondrial matrix"/>
    <property type="evidence" value="ECO:0000305"/>
    <property type="project" value="PomBase"/>
</dbReference>
<dbReference type="GO" id="GO:0005739">
    <property type="term" value="C:mitochondrion"/>
    <property type="evidence" value="ECO:0007005"/>
    <property type="project" value="PomBase"/>
</dbReference>
<dbReference type="GO" id="GO:0045252">
    <property type="term" value="C:oxoglutarate dehydrogenase complex"/>
    <property type="evidence" value="ECO:0000318"/>
    <property type="project" value="GO_Central"/>
</dbReference>
<dbReference type="GO" id="GO:0045254">
    <property type="term" value="C:pyruvate dehydrogenase complex"/>
    <property type="evidence" value="ECO:0000266"/>
    <property type="project" value="PomBase"/>
</dbReference>
<dbReference type="GO" id="GO:0004148">
    <property type="term" value="F:dihydrolipoyl dehydrogenase (NADH) activity"/>
    <property type="evidence" value="ECO:0000266"/>
    <property type="project" value="PomBase"/>
</dbReference>
<dbReference type="GO" id="GO:0050660">
    <property type="term" value="F:flavin adenine dinucleotide binding"/>
    <property type="evidence" value="ECO:0000318"/>
    <property type="project" value="GO_Central"/>
</dbReference>
<dbReference type="GO" id="GO:0006103">
    <property type="term" value="P:2-oxoglutarate metabolic process"/>
    <property type="evidence" value="ECO:0000318"/>
    <property type="project" value="GO_Central"/>
</dbReference>
<dbReference type="GO" id="GO:0009060">
    <property type="term" value="P:aerobic respiration"/>
    <property type="evidence" value="ECO:0000305"/>
    <property type="project" value="PomBase"/>
</dbReference>
<dbReference type="GO" id="GO:0019464">
    <property type="term" value="P:glycine decarboxylation via glycine cleavage system"/>
    <property type="evidence" value="ECO:0000266"/>
    <property type="project" value="PomBase"/>
</dbReference>
<dbReference type="GO" id="GO:0006086">
    <property type="term" value="P:pyruvate decarboxylation to acetyl-CoA"/>
    <property type="evidence" value="ECO:0000266"/>
    <property type="project" value="PomBase"/>
</dbReference>
<dbReference type="GO" id="GO:0006090">
    <property type="term" value="P:pyruvate metabolic process"/>
    <property type="evidence" value="ECO:0000318"/>
    <property type="project" value="GO_Central"/>
</dbReference>
<dbReference type="FunFam" id="3.30.390.30:FF:000001">
    <property type="entry name" value="Dihydrolipoyl dehydrogenase"/>
    <property type="match status" value="1"/>
</dbReference>
<dbReference type="FunFam" id="3.50.50.60:FF:000001">
    <property type="entry name" value="Dihydrolipoyl dehydrogenase, mitochondrial"/>
    <property type="match status" value="1"/>
</dbReference>
<dbReference type="Gene3D" id="3.30.390.30">
    <property type="match status" value="1"/>
</dbReference>
<dbReference type="Gene3D" id="3.50.50.60">
    <property type="entry name" value="FAD/NAD(P)-binding domain"/>
    <property type="match status" value="2"/>
</dbReference>
<dbReference type="InterPro" id="IPR050151">
    <property type="entry name" value="Class-I_Pyr_Nuc-Dis_Oxidored"/>
</dbReference>
<dbReference type="InterPro" id="IPR036188">
    <property type="entry name" value="FAD/NAD-bd_sf"/>
</dbReference>
<dbReference type="InterPro" id="IPR023753">
    <property type="entry name" value="FAD/NAD-binding_dom"/>
</dbReference>
<dbReference type="InterPro" id="IPR016156">
    <property type="entry name" value="FAD/NAD-linked_Rdtase_dimer_sf"/>
</dbReference>
<dbReference type="InterPro" id="IPR006258">
    <property type="entry name" value="Lipoamide_DH"/>
</dbReference>
<dbReference type="InterPro" id="IPR001100">
    <property type="entry name" value="Pyr_nuc-diS_OxRdtase"/>
</dbReference>
<dbReference type="InterPro" id="IPR004099">
    <property type="entry name" value="Pyr_nucl-diS_OxRdtase_dimer"/>
</dbReference>
<dbReference type="InterPro" id="IPR012999">
    <property type="entry name" value="Pyr_OxRdtase_I_AS"/>
</dbReference>
<dbReference type="NCBIfam" id="TIGR01350">
    <property type="entry name" value="lipoamide_DH"/>
    <property type="match status" value="1"/>
</dbReference>
<dbReference type="PANTHER" id="PTHR22912:SF151">
    <property type="entry name" value="DIHYDROLIPOYL DEHYDROGENASE, MITOCHONDRIAL"/>
    <property type="match status" value="1"/>
</dbReference>
<dbReference type="PANTHER" id="PTHR22912">
    <property type="entry name" value="DISULFIDE OXIDOREDUCTASE"/>
    <property type="match status" value="1"/>
</dbReference>
<dbReference type="Pfam" id="PF07992">
    <property type="entry name" value="Pyr_redox_2"/>
    <property type="match status" value="1"/>
</dbReference>
<dbReference type="Pfam" id="PF02852">
    <property type="entry name" value="Pyr_redox_dim"/>
    <property type="match status" value="1"/>
</dbReference>
<dbReference type="PIRSF" id="PIRSF000350">
    <property type="entry name" value="Mercury_reductase_MerA"/>
    <property type="match status" value="1"/>
</dbReference>
<dbReference type="PRINTS" id="PR00368">
    <property type="entry name" value="FADPNR"/>
</dbReference>
<dbReference type="PRINTS" id="PR00411">
    <property type="entry name" value="PNDRDTASEI"/>
</dbReference>
<dbReference type="SUPFAM" id="SSF51905">
    <property type="entry name" value="FAD/NAD(P)-binding domain"/>
    <property type="match status" value="1"/>
</dbReference>
<dbReference type="SUPFAM" id="SSF55424">
    <property type="entry name" value="FAD/NAD-linked reductases, dimerisation (C-terminal) domain"/>
    <property type="match status" value="1"/>
</dbReference>
<dbReference type="PROSITE" id="PS00076">
    <property type="entry name" value="PYRIDINE_REDOX_1"/>
    <property type="match status" value="1"/>
</dbReference>
<proteinExistence type="evidence at transcript level"/>
<keyword id="KW-1015">Disulfide bond</keyword>
<keyword id="KW-0274">FAD</keyword>
<keyword id="KW-0285">Flavoprotein</keyword>
<keyword id="KW-0496">Mitochondrion</keyword>
<keyword id="KW-0520">NAD</keyword>
<keyword id="KW-0560">Oxidoreductase</keyword>
<keyword id="KW-0676">Redox-active center</keyword>
<keyword id="KW-1185">Reference proteome</keyword>
<keyword id="KW-0809">Transit peptide</keyword>
<gene>
    <name type="primary">dld1</name>
    <name type="ORF">SPAC1002.09c</name>
</gene>
<organism>
    <name type="scientific">Schizosaccharomyces pombe (strain 972 / ATCC 24843)</name>
    <name type="common">Fission yeast</name>
    <dbReference type="NCBI Taxonomy" id="284812"/>
    <lineage>
        <taxon>Eukaryota</taxon>
        <taxon>Fungi</taxon>
        <taxon>Dikarya</taxon>
        <taxon>Ascomycota</taxon>
        <taxon>Taphrinomycotina</taxon>
        <taxon>Schizosaccharomycetes</taxon>
        <taxon>Schizosaccharomycetales</taxon>
        <taxon>Schizosaccharomycetaceae</taxon>
        <taxon>Schizosaccharomyces</taxon>
    </lineage>
</organism>
<comment type="function">
    <text evidence="1">Lipoamide dehydrogenase is a component of the alpha-ketoacid dehydrogenase complexes (By similarity). Malfunction of this protein blocks the progression of cell cycle from G1 to S phase.</text>
</comment>
<comment type="catalytic activity">
    <reaction>
        <text>N(6)-[(R)-dihydrolipoyl]-L-lysyl-[protein] + NAD(+) = N(6)-[(R)-lipoyl]-L-lysyl-[protein] + NADH + H(+)</text>
        <dbReference type="Rhea" id="RHEA:15045"/>
        <dbReference type="Rhea" id="RHEA-COMP:10474"/>
        <dbReference type="Rhea" id="RHEA-COMP:10475"/>
        <dbReference type="ChEBI" id="CHEBI:15378"/>
        <dbReference type="ChEBI" id="CHEBI:57540"/>
        <dbReference type="ChEBI" id="CHEBI:57945"/>
        <dbReference type="ChEBI" id="CHEBI:83099"/>
        <dbReference type="ChEBI" id="CHEBI:83100"/>
        <dbReference type="EC" id="1.8.1.4"/>
    </reaction>
</comment>
<comment type="cofactor">
    <cofactor evidence="1">
        <name>FAD</name>
        <dbReference type="ChEBI" id="CHEBI:57692"/>
    </cofactor>
    <text evidence="1">Binds 1 FAD per subunit.</text>
</comment>
<comment type="subunit">
    <text evidence="1">Homodimer.</text>
</comment>
<comment type="subcellular location">
    <subcellularLocation>
        <location evidence="2">Mitochondrion matrix</location>
    </subcellularLocation>
</comment>
<comment type="miscellaneous">
    <text>The active site is a redox-active disulfide bond.</text>
</comment>
<comment type="similarity">
    <text evidence="2">Belongs to the class-I pyridine nucleotide-disulfide oxidoreductase family.</text>
</comment>
<protein>
    <recommendedName>
        <fullName>Dihydrolipoyl dehydrogenase, mitochondrial</fullName>
        <ecNumber>1.8.1.4</ecNumber>
    </recommendedName>
    <alternativeName>
        <fullName>Dihydrolipoamide dehydrogenase</fullName>
        <shortName>DLDH</shortName>
    </alternativeName>
</protein>
<evidence type="ECO:0000250" key="1"/>
<evidence type="ECO:0000305" key="2"/>
<sequence length="511" mass="54731">MLNSVIKRSALCRFKFTCLQVSECRPAQIEISKRLYSAKASGNGEYDLCVIGGGPGGYVAAIRGAQLGLKTICVEKRGTLGGTCLNVGCIPSKALLNNSHIYHTVKHDTKRRGIDVSGVSVNLSQMMKAKDDSVKSLTSGIEYLFKKNKVEYAKGTGSFIDPQTLSVKGIDGAADQTIKAKNFIIATGSEVKPFPGVTIDEKKIVSSTGALSLSEVPKKMTVLGGGIIGLEMGSVWSRLGAEVTVVEFLPAVGGPMDADISKALSRIISKQGIKFKTSTKLLSAKVNGDSVEVEIENMKNNKRETYQTDVLLVAIGRVPYTEGLGLDKLGISMDKSNRVIMDSEYRTNIPHIRVIGDATLGPMLAHKAEDEGIAAVEYIAKGQGHVNYNCIPAVMYTHPEVAWVGITEQKAKESGIKYRIGTFPFSANSRAKTNMDADGLVKVIVDAETDRLLGVHMIGPMAGELIGEATLALEYGASAEDVARVCHAHPTLSEATKEAMMAAWCGKSIHF</sequence>
<name>DLDH_SCHPO</name>
<reference key="1">
    <citation type="journal article" date="1997" name="Biochim. Biophys. Acta">
        <title>Fission yeast dihydrolipoamide dehydrogenase gene is involved in G1/S cell cycle progression.</title>
        <authorList>
            <person name="Jang Y.-J."/>
            <person name="Chung K.-S."/>
            <person name="Park C."/>
            <person name="Yoo H.-S."/>
        </authorList>
    </citation>
    <scope>NUCLEOTIDE SEQUENCE [MRNA]</scope>
    <source>
        <strain>972 / ATCC 24843</strain>
    </source>
</reference>
<reference key="2">
    <citation type="journal article" date="2002" name="Nature">
        <title>The genome sequence of Schizosaccharomyces pombe.</title>
        <authorList>
            <person name="Wood V."/>
            <person name="Gwilliam R."/>
            <person name="Rajandream M.A."/>
            <person name="Lyne M.H."/>
            <person name="Lyne R."/>
            <person name="Stewart A."/>
            <person name="Sgouros J.G."/>
            <person name="Peat N."/>
            <person name="Hayles J."/>
            <person name="Baker S.G."/>
            <person name="Basham D."/>
            <person name="Bowman S."/>
            <person name="Brooks K."/>
            <person name="Brown D."/>
            <person name="Brown S."/>
            <person name="Chillingworth T."/>
            <person name="Churcher C.M."/>
            <person name="Collins M."/>
            <person name="Connor R."/>
            <person name="Cronin A."/>
            <person name="Davis P."/>
            <person name="Feltwell T."/>
            <person name="Fraser A."/>
            <person name="Gentles S."/>
            <person name="Goble A."/>
            <person name="Hamlin N."/>
            <person name="Harris D.E."/>
            <person name="Hidalgo J."/>
            <person name="Hodgson G."/>
            <person name="Holroyd S."/>
            <person name="Hornsby T."/>
            <person name="Howarth S."/>
            <person name="Huckle E.J."/>
            <person name="Hunt S."/>
            <person name="Jagels K."/>
            <person name="James K.D."/>
            <person name="Jones L."/>
            <person name="Jones M."/>
            <person name="Leather S."/>
            <person name="McDonald S."/>
            <person name="McLean J."/>
            <person name="Mooney P."/>
            <person name="Moule S."/>
            <person name="Mungall K.L."/>
            <person name="Murphy L.D."/>
            <person name="Niblett D."/>
            <person name="Odell C."/>
            <person name="Oliver K."/>
            <person name="O'Neil S."/>
            <person name="Pearson D."/>
            <person name="Quail M.A."/>
            <person name="Rabbinowitsch E."/>
            <person name="Rutherford K.M."/>
            <person name="Rutter S."/>
            <person name="Saunders D."/>
            <person name="Seeger K."/>
            <person name="Sharp S."/>
            <person name="Skelton J."/>
            <person name="Simmonds M.N."/>
            <person name="Squares R."/>
            <person name="Squares S."/>
            <person name="Stevens K."/>
            <person name="Taylor K."/>
            <person name="Taylor R.G."/>
            <person name="Tivey A."/>
            <person name="Walsh S.V."/>
            <person name="Warren T."/>
            <person name="Whitehead S."/>
            <person name="Woodward J.R."/>
            <person name="Volckaert G."/>
            <person name="Aert R."/>
            <person name="Robben J."/>
            <person name="Grymonprez B."/>
            <person name="Weltjens I."/>
            <person name="Vanstreels E."/>
            <person name="Rieger M."/>
            <person name="Schaefer M."/>
            <person name="Mueller-Auer S."/>
            <person name="Gabel C."/>
            <person name="Fuchs M."/>
            <person name="Duesterhoeft A."/>
            <person name="Fritzc C."/>
            <person name="Holzer E."/>
            <person name="Moestl D."/>
            <person name="Hilbert H."/>
            <person name="Borzym K."/>
            <person name="Langer I."/>
            <person name="Beck A."/>
            <person name="Lehrach H."/>
            <person name="Reinhardt R."/>
            <person name="Pohl T.M."/>
            <person name="Eger P."/>
            <person name="Zimmermann W."/>
            <person name="Wedler H."/>
            <person name="Wambutt R."/>
            <person name="Purnelle B."/>
            <person name="Goffeau A."/>
            <person name="Cadieu E."/>
            <person name="Dreano S."/>
            <person name="Gloux S."/>
            <person name="Lelaure V."/>
            <person name="Mottier S."/>
            <person name="Galibert F."/>
            <person name="Aves S.J."/>
            <person name="Xiang Z."/>
            <person name="Hunt C."/>
            <person name="Moore K."/>
            <person name="Hurst S.M."/>
            <person name="Lucas M."/>
            <person name="Rochet M."/>
            <person name="Gaillardin C."/>
            <person name="Tallada V.A."/>
            <person name="Garzon A."/>
            <person name="Thode G."/>
            <person name="Daga R.R."/>
            <person name="Cruzado L."/>
            <person name="Jimenez J."/>
            <person name="Sanchez M."/>
            <person name="del Rey F."/>
            <person name="Benito J."/>
            <person name="Dominguez A."/>
            <person name="Revuelta J.L."/>
            <person name="Moreno S."/>
            <person name="Armstrong J."/>
            <person name="Forsburg S.L."/>
            <person name="Cerutti L."/>
            <person name="Lowe T."/>
            <person name="McCombie W.R."/>
            <person name="Paulsen I."/>
            <person name="Potashkin J."/>
            <person name="Shpakovski G.V."/>
            <person name="Ussery D."/>
            <person name="Barrell B.G."/>
            <person name="Nurse P."/>
        </authorList>
    </citation>
    <scope>NUCLEOTIDE SEQUENCE [LARGE SCALE GENOMIC DNA]</scope>
    <source>
        <strain>972 / ATCC 24843</strain>
    </source>
</reference>
<feature type="transit peptide" description="Mitochondrion">
    <location>
        <begin position="1"/>
        <end status="unknown"/>
    </location>
</feature>
<feature type="chain" id="PRO_0000030300" description="Dihydrolipoyl dehydrogenase, mitochondrial">
    <location>
        <begin status="unknown"/>
        <end position="511"/>
    </location>
</feature>
<feature type="active site" description="Proton acceptor" evidence="1">
    <location>
        <position position="489"/>
    </location>
</feature>
<feature type="binding site" evidence="1">
    <location>
        <begin position="75"/>
        <end position="84"/>
    </location>
    <ligand>
        <name>FAD</name>
        <dbReference type="ChEBI" id="CHEBI:57692"/>
    </ligand>
</feature>
<feature type="binding site" evidence="1">
    <location>
        <position position="93"/>
    </location>
    <ligand>
        <name>FAD</name>
        <dbReference type="ChEBI" id="CHEBI:57692"/>
    </ligand>
</feature>
<feature type="binding site" evidence="1">
    <location>
        <position position="157"/>
    </location>
    <ligand>
        <name>FAD</name>
        <dbReference type="ChEBI" id="CHEBI:57692"/>
    </ligand>
</feature>
<feature type="binding site" evidence="1">
    <location>
        <begin position="187"/>
        <end position="189"/>
    </location>
    <ligand>
        <name>FAD</name>
        <dbReference type="ChEBI" id="CHEBI:57692"/>
    </ligand>
</feature>
<feature type="binding site" evidence="1">
    <location>
        <begin position="224"/>
        <end position="231"/>
    </location>
    <ligand>
        <name>NAD(+)</name>
        <dbReference type="ChEBI" id="CHEBI:57540"/>
    </ligand>
</feature>
<feature type="binding site" evidence="1">
    <location>
        <position position="247"/>
    </location>
    <ligand>
        <name>NAD(+)</name>
        <dbReference type="ChEBI" id="CHEBI:57540"/>
    </ligand>
</feature>
<feature type="binding site" evidence="1">
    <location>
        <position position="281"/>
    </location>
    <ligand>
        <name>NAD(+)</name>
        <dbReference type="ChEBI" id="CHEBI:57540"/>
    </ligand>
</feature>
<feature type="binding site" evidence="1">
    <location>
        <position position="316"/>
    </location>
    <ligand>
        <name>NAD(+)</name>
        <dbReference type="ChEBI" id="CHEBI:57540"/>
    </ligand>
</feature>
<feature type="binding site" evidence="1">
    <location>
        <position position="357"/>
    </location>
    <ligand>
        <name>FAD</name>
        <dbReference type="ChEBI" id="CHEBI:57692"/>
    </ligand>
</feature>
<feature type="binding site" evidence="1">
    <location>
        <begin position="363"/>
        <end position="366"/>
    </location>
    <ligand>
        <name>FAD</name>
        <dbReference type="ChEBI" id="CHEBI:57692"/>
    </ligand>
</feature>
<feature type="disulfide bond" description="Redox-active" evidence="1">
    <location>
        <begin position="84"/>
        <end position="89"/>
    </location>
</feature>
<feature type="sequence conflict" description="In Ref. 1; AAB97089." evidence="2" ref="1">
    <original>ALSLSEV</original>
    <variation>GPYLYQRY</variation>
    <location>
        <begin position="210"/>
        <end position="216"/>
    </location>
</feature>
<feature type="sequence conflict" description="In Ref. 1; AAB97089." evidence="2" ref="1">
    <original>T</original>
    <variation>R</variation>
    <location>
        <position position="277"/>
    </location>
</feature>
<feature type="sequence conflict" description="In Ref. 1; AAB97089." evidence="2" ref="1">
    <original>L</original>
    <variation>V</variation>
    <location>
        <position position="282"/>
    </location>
</feature>
<feature type="sequence conflict" description="In Ref. 1; AAB97089." evidence="2" ref="1">
    <original>P</original>
    <variation>G</variation>
    <location>
        <position position="424"/>
    </location>
</feature>
<accession>O00087</accession>
<accession>Q9US50</accession>